<dbReference type="EC" id="2.7.7.85" evidence="1"/>
<dbReference type="EMBL" id="CP001078">
    <property type="protein sequence ID" value="ACD52769.1"/>
    <property type="molecule type" value="Genomic_DNA"/>
</dbReference>
<dbReference type="RefSeq" id="WP_003369152.1">
    <property type="nucleotide sequence ID" value="NC_010723.1"/>
</dbReference>
<dbReference type="SMR" id="B2UY85"/>
<dbReference type="KEGG" id="cbt:CLH_0211"/>
<dbReference type="HOGENOM" id="CLU_787128_0_0_9"/>
<dbReference type="GO" id="GO:0004016">
    <property type="term" value="F:adenylate cyclase activity"/>
    <property type="evidence" value="ECO:0007669"/>
    <property type="project" value="TreeGrafter"/>
</dbReference>
<dbReference type="GO" id="GO:0005524">
    <property type="term" value="F:ATP binding"/>
    <property type="evidence" value="ECO:0007669"/>
    <property type="project" value="UniProtKB-UniRule"/>
</dbReference>
<dbReference type="GO" id="GO:0106408">
    <property type="term" value="F:diadenylate cyclase activity"/>
    <property type="evidence" value="ECO:0007669"/>
    <property type="project" value="UniProtKB-EC"/>
</dbReference>
<dbReference type="GO" id="GO:0003677">
    <property type="term" value="F:DNA binding"/>
    <property type="evidence" value="ECO:0007669"/>
    <property type="project" value="UniProtKB-UniRule"/>
</dbReference>
<dbReference type="GO" id="GO:0006281">
    <property type="term" value="P:DNA repair"/>
    <property type="evidence" value="ECO:0007669"/>
    <property type="project" value="UniProtKB-UniRule"/>
</dbReference>
<dbReference type="FunFam" id="3.40.1700.10:FF:000001">
    <property type="entry name" value="DNA integrity scanning protein DisA"/>
    <property type="match status" value="1"/>
</dbReference>
<dbReference type="Gene3D" id="1.10.150.20">
    <property type="entry name" value="5' to 3' exonuclease, C-terminal subdomain"/>
    <property type="match status" value="1"/>
</dbReference>
<dbReference type="Gene3D" id="1.20.1260.110">
    <property type="entry name" value="DNA integrity scanning linker region"/>
    <property type="match status" value="1"/>
</dbReference>
<dbReference type="Gene3D" id="3.40.1700.10">
    <property type="entry name" value="DNA integrity scanning protein, DisA, N-terminal domain"/>
    <property type="match status" value="1"/>
</dbReference>
<dbReference type="HAMAP" id="MF_01438">
    <property type="entry name" value="DisA"/>
    <property type="match status" value="1"/>
</dbReference>
<dbReference type="InterPro" id="IPR050338">
    <property type="entry name" value="DisA"/>
</dbReference>
<dbReference type="InterPro" id="IPR038331">
    <property type="entry name" value="DisA_sf"/>
</dbReference>
<dbReference type="InterPro" id="IPR036888">
    <property type="entry name" value="DNA_integrity_DisA_N_sf"/>
</dbReference>
<dbReference type="InterPro" id="IPR018906">
    <property type="entry name" value="DNA_integrity_scan_DisA_link"/>
</dbReference>
<dbReference type="InterPro" id="IPR003390">
    <property type="entry name" value="DNA_integrity_scan_DisA_N"/>
</dbReference>
<dbReference type="InterPro" id="IPR023763">
    <property type="entry name" value="DNA_integrity_scanning_protein"/>
</dbReference>
<dbReference type="InterPro" id="IPR010994">
    <property type="entry name" value="RuvA_2-like"/>
</dbReference>
<dbReference type="NCBIfam" id="NF010009">
    <property type="entry name" value="PRK13482.1"/>
    <property type="match status" value="1"/>
</dbReference>
<dbReference type="PANTHER" id="PTHR34185">
    <property type="entry name" value="DIADENYLATE CYCLASE"/>
    <property type="match status" value="1"/>
</dbReference>
<dbReference type="PANTHER" id="PTHR34185:SF3">
    <property type="entry name" value="DNA INTEGRITY SCANNING PROTEIN DISA"/>
    <property type="match status" value="1"/>
</dbReference>
<dbReference type="Pfam" id="PF02457">
    <property type="entry name" value="DAC"/>
    <property type="match status" value="1"/>
</dbReference>
<dbReference type="Pfam" id="PF10635">
    <property type="entry name" value="DisA-linker"/>
    <property type="match status" value="1"/>
</dbReference>
<dbReference type="SUPFAM" id="SSF47781">
    <property type="entry name" value="RuvA domain 2-like"/>
    <property type="match status" value="1"/>
</dbReference>
<dbReference type="SUPFAM" id="SSF143597">
    <property type="entry name" value="YojJ-like"/>
    <property type="match status" value="1"/>
</dbReference>
<dbReference type="PROSITE" id="PS51794">
    <property type="entry name" value="DAC"/>
    <property type="match status" value="1"/>
</dbReference>
<gene>
    <name evidence="1" type="primary">disA</name>
    <name type="ordered locus">CLH_0211</name>
</gene>
<accession>B2UY85</accession>
<protein>
    <recommendedName>
        <fullName evidence="1">DNA integrity scanning protein DisA</fullName>
    </recommendedName>
    <alternativeName>
        <fullName evidence="1">Cyclic di-AMP synthase</fullName>
        <shortName evidence="1">c-di-AMP synthase</shortName>
    </alternativeName>
    <alternativeName>
        <fullName evidence="1">Diadenylate cyclase</fullName>
        <ecNumber evidence="1">2.7.7.85</ecNumber>
    </alternativeName>
</protein>
<proteinExistence type="inferred from homology"/>
<feature type="chain" id="PRO_1000145858" description="DNA integrity scanning protein DisA">
    <location>
        <begin position="1"/>
        <end position="354"/>
    </location>
</feature>
<feature type="domain" description="DAC" evidence="2">
    <location>
        <begin position="6"/>
        <end position="144"/>
    </location>
</feature>
<feature type="binding site" evidence="1">
    <location>
        <position position="73"/>
    </location>
    <ligand>
        <name>ATP</name>
        <dbReference type="ChEBI" id="CHEBI:30616"/>
    </ligand>
</feature>
<feature type="binding site" evidence="1">
    <location>
        <position position="91"/>
    </location>
    <ligand>
        <name>ATP</name>
        <dbReference type="ChEBI" id="CHEBI:30616"/>
    </ligand>
</feature>
<feature type="binding site" evidence="1">
    <location>
        <begin position="104"/>
        <end position="108"/>
    </location>
    <ligand>
        <name>ATP</name>
        <dbReference type="ChEBI" id="CHEBI:30616"/>
    </ligand>
</feature>
<comment type="function">
    <text evidence="1">Participates in a DNA-damage check-point that is active prior to asymmetric division when DNA is damaged. DisA forms globular foci that rapidly scan along the chromosomes during sporulation, searching for lesions. When a lesion is present, DisA pauses at the lesion site. This triggers a cellular response that culminates in a temporary block in sporulation initiation.</text>
</comment>
<comment type="function">
    <text evidence="1">Also has diadenylate cyclase activity, catalyzing the condensation of 2 ATP molecules into cyclic di-AMP (c-di-AMP). c-di-AMP acts as a signaling molecule that couples DNA integrity with progression of sporulation. The rise in c-di-AMP level generated by DisA while scanning the chromosome, operates as a positive signal that advances sporulation; upon encountering a lesion, the DisA focus arrests at the damaged site and halts c-di-AMP synthesis.</text>
</comment>
<comment type="catalytic activity">
    <reaction evidence="1">
        <text>2 ATP = 3',3'-c-di-AMP + 2 diphosphate</text>
        <dbReference type="Rhea" id="RHEA:35655"/>
        <dbReference type="ChEBI" id="CHEBI:30616"/>
        <dbReference type="ChEBI" id="CHEBI:33019"/>
        <dbReference type="ChEBI" id="CHEBI:71500"/>
        <dbReference type="EC" id="2.7.7.85"/>
    </reaction>
</comment>
<comment type="cofactor">
    <cofactor evidence="1">
        <name>Mg(2+)</name>
        <dbReference type="ChEBI" id="CHEBI:18420"/>
    </cofactor>
</comment>
<comment type="subunit">
    <text evidence="1">Homooctamer.</text>
</comment>
<comment type="similarity">
    <text evidence="1">Belongs to the DisA family.</text>
</comment>
<sequence>MRLEKGMKIKDTLKIMCPGTQLREGLENILRAKTGGLIVIGDNKEVMDTVDGGFTLNSDYSPSYVYELAKMDGAIVISEDLKKIVCANAQLIPDPSIITHETGTRHRTAHRIAKQTNNIVIAISQRRNIITVYKGDIKYVLRDSSVILARANQAIQTLEKYVSVLERVINNLNLLEFQDLTTLFDVVTAIQRTEMVMRIVEEINMYILELGNEGRLISMQLNELVKHIERDGILLIRDYCKEDFEYNEVYEQIQKLSAAELLDLDAIARLLGHTGDPLVDTLISAKGYRILGKVPRIPSTVIENLIKEFRELNSVIEADLDELDIVEGIGEARAKAIKDGLKRIREQILLNKKI</sequence>
<keyword id="KW-0067">ATP-binding</keyword>
<keyword id="KW-0227">DNA damage</keyword>
<keyword id="KW-0234">DNA repair</keyword>
<keyword id="KW-0238">DNA-binding</keyword>
<keyword id="KW-0460">Magnesium</keyword>
<keyword id="KW-0547">Nucleotide-binding</keyword>
<keyword id="KW-0548">Nucleotidyltransferase</keyword>
<keyword id="KW-0808">Transferase</keyword>
<evidence type="ECO:0000255" key="1">
    <source>
        <dbReference type="HAMAP-Rule" id="MF_01438"/>
    </source>
</evidence>
<evidence type="ECO:0000255" key="2">
    <source>
        <dbReference type="PROSITE-ProRule" id="PRU01130"/>
    </source>
</evidence>
<organism>
    <name type="scientific">Clostridium botulinum (strain Alaska E43 / Type E3)</name>
    <dbReference type="NCBI Taxonomy" id="508767"/>
    <lineage>
        <taxon>Bacteria</taxon>
        <taxon>Bacillati</taxon>
        <taxon>Bacillota</taxon>
        <taxon>Clostridia</taxon>
        <taxon>Eubacteriales</taxon>
        <taxon>Clostridiaceae</taxon>
        <taxon>Clostridium</taxon>
    </lineage>
</organism>
<reference key="1">
    <citation type="submission" date="2008-05" db="EMBL/GenBank/DDBJ databases">
        <title>Complete genome sequence of Clostridium botulinum E3 str. Alaska E43.</title>
        <authorList>
            <person name="Brinkac L.M."/>
            <person name="Brown J.L."/>
            <person name="Bruce D."/>
            <person name="Detter C."/>
            <person name="Munk C."/>
            <person name="Smith L.A."/>
            <person name="Smith T.J."/>
            <person name="Sutton G."/>
            <person name="Brettin T.S."/>
        </authorList>
    </citation>
    <scope>NUCLEOTIDE SEQUENCE [LARGE SCALE GENOMIC DNA]</scope>
    <source>
        <strain>Alaska E43 / Type E3</strain>
    </source>
</reference>
<name>DISA_CLOBA</name>